<sequence>MIAAQAKLVYHLNKYYNEKCQSRKAAISKTIREVCKVVSDVLKEVEVQEPRFISSLNEMDNRFEGLEVISPTEFEVVLYLNQMGVFNFVDDGSLPGCAVLKLSDGRKRSMSLWVEFITASGYLSARKIRSRFQTLVAQAVDKCSYRDVVKMVADTSEVKLRIRDRYVVQITPAFKCTGIWPRSAAHWPLPHIPWPGPNRVAEVKAEGFNLLSKECYSLNGKQSSAESDAWVLQFAEAENRLLLGGCRKKCLSLLKTLRDRHLELPGQPLNNYHMKTLVSYECEKHPRESDWDENCLGDRLNGILLQLISCLQCRRCPHYFLPNLDLFQGKPHSALENAAKQTWRLAREILTNPKSLEKL</sequence>
<proteinExistence type="evidence at transcript level"/>
<evidence type="ECO:0000250" key="1">
    <source>
        <dbReference type="UniProtKB" id="O70299"/>
    </source>
</evidence>
<evidence type="ECO:0000250" key="2">
    <source>
        <dbReference type="UniProtKB" id="Q13394"/>
    </source>
</evidence>
<evidence type="ECO:0000250" key="3">
    <source>
        <dbReference type="UniProtKB" id="Q8N884"/>
    </source>
</evidence>
<evidence type="ECO:0000269" key="4">
    <source>
    </source>
</evidence>
<evidence type="ECO:0000305" key="5"/>
<organism>
    <name type="scientific">Danio rerio</name>
    <name type="common">Zebrafish</name>
    <name type="synonym">Brachydanio rerio</name>
    <dbReference type="NCBI Taxonomy" id="7955"/>
    <lineage>
        <taxon>Eukaryota</taxon>
        <taxon>Metazoa</taxon>
        <taxon>Chordata</taxon>
        <taxon>Craniata</taxon>
        <taxon>Vertebrata</taxon>
        <taxon>Euteleostomi</taxon>
        <taxon>Actinopterygii</taxon>
        <taxon>Neopterygii</taxon>
        <taxon>Teleostei</taxon>
        <taxon>Ostariophysi</taxon>
        <taxon>Cypriniformes</taxon>
        <taxon>Danionidae</taxon>
        <taxon>Danioninae</taxon>
        <taxon>Danio</taxon>
    </lineage>
</organism>
<protein>
    <recommendedName>
        <fullName>Putative nucleotidyltransferase MAB21L1</fullName>
        <ecNumber evidence="5">2.7.7.-</ecNumber>
    </recommendedName>
    <alternativeName>
        <fullName>Protein mab-21-like 1</fullName>
    </alternativeName>
</protein>
<dbReference type="EC" id="2.7.7.-" evidence="5"/>
<dbReference type="EMBL" id="AY048747">
    <property type="protein sequence ID" value="AAL09173.1"/>
    <property type="molecule type" value="mRNA"/>
</dbReference>
<dbReference type="EMBL" id="BC057249">
    <property type="protein sequence ID" value="AAH57249.1"/>
    <property type="molecule type" value="mRNA"/>
</dbReference>
<dbReference type="EMBL" id="BC066667">
    <property type="protein sequence ID" value="AAH66667.1"/>
    <property type="molecule type" value="mRNA"/>
</dbReference>
<dbReference type="RefSeq" id="NP_694506.2">
    <property type="nucleotide sequence ID" value="NM_152974.2"/>
</dbReference>
<dbReference type="SMR" id="Q6NYB4"/>
<dbReference type="FunCoup" id="Q6NYB4">
    <property type="interactions" value="463"/>
</dbReference>
<dbReference type="STRING" id="7955.ENSDARP00000138318"/>
<dbReference type="PaxDb" id="7955-ENSDARP00000071872"/>
<dbReference type="Ensembl" id="ENSDART00000164928">
    <property type="protein sequence ID" value="ENSDARP00000138318"/>
    <property type="gene ID" value="ENSDARG00000102047"/>
</dbReference>
<dbReference type="GeneID" id="246091"/>
<dbReference type="KEGG" id="dre:246091"/>
<dbReference type="AGR" id="ZFIN:ZDB-GENE-020516-1"/>
<dbReference type="CTD" id="4081"/>
<dbReference type="ZFIN" id="ZDB-GENE-020516-1">
    <property type="gene designation" value="mab21l1"/>
</dbReference>
<dbReference type="eggNOG" id="KOG3963">
    <property type="taxonomic scope" value="Eukaryota"/>
</dbReference>
<dbReference type="HOGENOM" id="CLU_045315_0_0_1"/>
<dbReference type="InParanoid" id="Q6NYB4"/>
<dbReference type="OMA" id="RESIYMK"/>
<dbReference type="OrthoDB" id="5961151at2759"/>
<dbReference type="PhylomeDB" id="Q6NYB4"/>
<dbReference type="TreeFam" id="TF315012"/>
<dbReference type="PRO" id="PR:Q6NYB4"/>
<dbReference type="Proteomes" id="UP000000437">
    <property type="component" value="Chromosome 15"/>
</dbReference>
<dbReference type="Bgee" id="ENSDARG00000102047">
    <property type="expression patterns" value="Expressed in camera-type eye and 32 other cell types or tissues"/>
</dbReference>
<dbReference type="GO" id="GO:0005634">
    <property type="term" value="C:nucleus"/>
    <property type="evidence" value="ECO:0007669"/>
    <property type="project" value="UniProtKB-SubCell"/>
</dbReference>
<dbReference type="GO" id="GO:0046872">
    <property type="term" value="F:metal ion binding"/>
    <property type="evidence" value="ECO:0007669"/>
    <property type="project" value="UniProtKB-KW"/>
</dbReference>
<dbReference type="GO" id="GO:0000166">
    <property type="term" value="F:nucleotide binding"/>
    <property type="evidence" value="ECO:0007669"/>
    <property type="project" value="UniProtKB-KW"/>
</dbReference>
<dbReference type="GO" id="GO:0016779">
    <property type="term" value="F:nucleotidyltransferase activity"/>
    <property type="evidence" value="ECO:0007669"/>
    <property type="project" value="UniProtKB-KW"/>
</dbReference>
<dbReference type="GO" id="GO:0061303">
    <property type="term" value="P:cornea development in camera-type eye"/>
    <property type="evidence" value="ECO:0000315"/>
    <property type="project" value="ZFIN"/>
</dbReference>
<dbReference type="FunFam" id="1.10.1410.40:FF:000002">
    <property type="entry name" value="protein mab-21-like 1"/>
    <property type="match status" value="1"/>
</dbReference>
<dbReference type="FunFam" id="3.30.460.90:FF:000001">
    <property type="entry name" value="protein mab-21-like 2"/>
    <property type="match status" value="1"/>
</dbReference>
<dbReference type="Gene3D" id="1.10.1410.40">
    <property type="match status" value="1"/>
</dbReference>
<dbReference type="Gene3D" id="3.30.460.90">
    <property type="match status" value="1"/>
</dbReference>
<dbReference type="InterPro" id="IPR046903">
    <property type="entry name" value="Mab-21-like_nuc_Trfase"/>
</dbReference>
<dbReference type="InterPro" id="IPR046906">
    <property type="entry name" value="Mab-21_HhH/H2TH-like"/>
</dbReference>
<dbReference type="InterPro" id="IPR024810">
    <property type="entry name" value="MAB21L/cGLR"/>
</dbReference>
<dbReference type="PANTHER" id="PTHR10656">
    <property type="entry name" value="CELL FATE DETERMINING PROTEIN MAB21-RELATED"/>
    <property type="match status" value="1"/>
</dbReference>
<dbReference type="PANTHER" id="PTHR10656:SF38">
    <property type="entry name" value="NUCLEOTIDYLTRANSFERASE MAB21L1-RELATED"/>
    <property type="match status" value="1"/>
</dbReference>
<dbReference type="Pfam" id="PF03281">
    <property type="entry name" value="Mab-21"/>
    <property type="match status" value="1"/>
</dbReference>
<dbReference type="Pfam" id="PF20266">
    <property type="entry name" value="Mab-21_C"/>
    <property type="match status" value="1"/>
</dbReference>
<dbReference type="SMART" id="SM01265">
    <property type="entry name" value="Mab-21"/>
    <property type="match status" value="1"/>
</dbReference>
<reference key="1">
    <citation type="journal article" date="2002" name="Mech. Dev.">
        <title>Expression of zebrafish mab21 genes marks the differentiating eye, midbrain and neural tube.</title>
        <authorList>
            <person name="Wong Y.-M."/>
            <person name="Chow K.L."/>
        </authorList>
    </citation>
    <scope>NUCLEOTIDE SEQUENCE [MRNA]</scope>
    <scope>DEVELOPMENTAL STAGE</scope>
</reference>
<reference key="2">
    <citation type="submission" date="2004-03" db="EMBL/GenBank/DDBJ databases">
        <authorList>
            <consortium name="NIH - Zebrafish Gene Collection (ZGC) project"/>
        </authorList>
    </citation>
    <scope>NUCLEOTIDE SEQUENCE [LARGE SCALE MRNA]</scope>
    <source>
        <tissue>Embryo</tissue>
    </source>
</reference>
<comment type="function">
    <text evidence="1 2">Putative nucleotidyltransferase required for several aspects of embryonic development including normal development of the eye (By similarity). It is unclear whether it displays nucleotidyltransferase activity in vivo. Binds single-stranded RNA (ssRNA) (By similarity).</text>
</comment>
<comment type="subunit">
    <text evidence="2">Monomer. Homodecamer; composed of 2 back to back homopentamers. The protein may exist as monomer in solution and oiligomerizes upon ligand binding.</text>
</comment>
<comment type="subcellular location">
    <subcellularLocation>
        <location evidence="1">Nucleus</location>
    </subcellularLocation>
</comment>
<comment type="developmental stage">
    <text evidence="4">Expressed from 8 hours post-fertilization (hpf). Expressed in the midbrain and the optic primordia from 14 hpf and around the eyes, the branchial pouches and the neural tube at 24 hpf. By 48 hpf, expression in the midbrain, branchial pouches and the neural tube was reduced to a very low level.</text>
</comment>
<comment type="similarity">
    <text evidence="5">Belongs to the mab-21 family.</text>
</comment>
<feature type="chain" id="PRO_0000312784" description="Putative nucleotidyltransferase MAB21L1">
    <location>
        <begin position="1"/>
        <end position="359"/>
    </location>
</feature>
<feature type="binding site" evidence="2">
    <location>
        <begin position="23"/>
        <end position="24"/>
    </location>
    <ligand>
        <name>a ribonucleoside 5'-triphosphate</name>
        <dbReference type="ChEBI" id="CHEBI:61557"/>
    </ligand>
</feature>
<feature type="binding site" evidence="2">
    <location>
        <begin position="63"/>
        <end position="66"/>
    </location>
    <ligand>
        <name>a ribonucleoside 5'-triphosphate</name>
        <dbReference type="ChEBI" id="CHEBI:61557"/>
    </ligand>
</feature>
<feature type="binding site" evidence="3">
    <location>
        <position position="73"/>
    </location>
    <ligand>
        <name>Mg(2+)</name>
        <dbReference type="ChEBI" id="CHEBI:18420"/>
        <note>catalytic</note>
    </ligand>
</feature>
<feature type="binding site" evidence="3">
    <location>
        <position position="75"/>
    </location>
    <ligand>
        <name>Mg(2+)</name>
        <dbReference type="ChEBI" id="CHEBI:18420"/>
        <note>catalytic</note>
    </ligand>
</feature>
<feature type="binding site" evidence="2">
    <location>
        <position position="248"/>
    </location>
    <ligand>
        <name>a ribonucleoside 5'-triphosphate</name>
        <dbReference type="ChEBI" id="CHEBI:61557"/>
    </ligand>
</feature>
<feature type="binding site" evidence="2">
    <location>
        <begin position="252"/>
        <end position="255"/>
    </location>
    <ligand>
        <name>a ribonucleoside 5'-triphosphate</name>
        <dbReference type="ChEBI" id="CHEBI:61557"/>
    </ligand>
</feature>
<feature type="sequence conflict" description="In Ref. 1; AAL09173." evidence="5" ref="1">
    <original>I</original>
    <variation>V</variation>
    <location>
        <position position="179"/>
    </location>
</feature>
<accession>Q6NYB4</accession>
<accession>Q8JIW4</accession>
<name>MB211_DANRE</name>
<gene>
    <name type="primary">mab21l1</name>
</gene>
<keyword id="KW-0217">Developmental protein</keyword>
<keyword id="KW-0460">Magnesium</keyword>
<keyword id="KW-0479">Metal-binding</keyword>
<keyword id="KW-0547">Nucleotide-binding</keyword>
<keyword id="KW-0548">Nucleotidyltransferase</keyword>
<keyword id="KW-0539">Nucleus</keyword>
<keyword id="KW-1185">Reference proteome</keyword>
<keyword id="KW-0808">Transferase</keyword>